<accession>Q4L481</accession>
<protein>
    <recommendedName>
        <fullName>Response regulator protein GraR</fullName>
    </recommendedName>
    <alternativeName>
        <fullName>Glycopeptide resistance-associated protein R</fullName>
    </alternativeName>
</protein>
<name>GRAR_STAHJ</name>
<proteinExistence type="inferred from homology"/>
<reference key="1">
    <citation type="journal article" date="2005" name="J. Bacteriol.">
        <title>Whole-genome sequencing of Staphylococcus haemolyticus uncovers the extreme plasticity of its genome and the evolution of human-colonizing staphylococcal species.</title>
        <authorList>
            <person name="Takeuchi F."/>
            <person name="Watanabe S."/>
            <person name="Baba T."/>
            <person name="Yuzawa H."/>
            <person name="Ito T."/>
            <person name="Morimoto Y."/>
            <person name="Kuroda M."/>
            <person name="Cui L."/>
            <person name="Takahashi M."/>
            <person name="Ankai A."/>
            <person name="Baba S."/>
            <person name="Fukui S."/>
            <person name="Lee J.C."/>
            <person name="Hiramatsu K."/>
        </authorList>
    </citation>
    <scope>NUCLEOTIDE SEQUENCE [LARGE SCALE GENOMIC DNA]</scope>
    <source>
        <strain>JCSC1435</strain>
    </source>
</reference>
<feature type="chain" id="PRO_0000347911" description="Response regulator protein GraR">
    <location>
        <begin position="1"/>
        <end position="224"/>
    </location>
</feature>
<feature type="domain" description="Response regulatory" evidence="2">
    <location>
        <begin position="2"/>
        <end position="115"/>
    </location>
</feature>
<feature type="DNA-binding region" description="OmpR/PhoB-type" evidence="3">
    <location>
        <begin position="126"/>
        <end position="224"/>
    </location>
</feature>
<feature type="modified residue" description="4-aspartylphosphate" evidence="2">
    <location>
        <position position="51"/>
    </location>
</feature>
<dbReference type="EMBL" id="AP006716">
    <property type="protein sequence ID" value="BAE05544.1"/>
    <property type="molecule type" value="Genomic_DNA"/>
</dbReference>
<dbReference type="RefSeq" id="WP_011276495.1">
    <property type="nucleotide sequence ID" value="NC_007168.1"/>
</dbReference>
<dbReference type="SMR" id="Q4L481"/>
<dbReference type="GeneID" id="93781554"/>
<dbReference type="KEGG" id="sha:SH2235"/>
<dbReference type="eggNOG" id="COG0745">
    <property type="taxonomic scope" value="Bacteria"/>
</dbReference>
<dbReference type="HOGENOM" id="CLU_000445_30_3_9"/>
<dbReference type="OrthoDB" id="9790442at2"/>
<dbReference type="Proteomes" id="UP000000543">
    <property type="component" value="Chromosome"/>
</dbReference>
<dbReference type="GO" id="GO:0005829">
    <property type="term" value="C:cytosol"/>
    <property type="evidence" value="ECO:0007669"/>
    <property type="project" value="TreeGrafter"/>
</dbReference>
<dbReference type="GO" id="GO:0032993">
    <property type="term" value="C:protein-DNA complex"/>
    <property type="evidence" value="ECO:0007669"/>
    <property type="project" value="TreeGrafter"/>
</dbReference>
<dbReference type="GO" id="GO:0000156">
    <property type="term" value="F:phosphorelay response regulator activity"/>
    <property type="evidence" value="ECO:0007669"/>
    <property type="project" value="TreeGrafter"/>
</dbReference>
<dbReference type="GO" id="GO:0000976">
    <property type="term" value="F:transcription cis-regulatory region binding"/>
    <property type="evidence" value="ECO:0007669"/>
    <property type="project" value="TreeGrafter"/>
</dbReference>
<dbReference type="GO" id="GO:0006355">
    <property type="term" value="P:regulation of DNA-templated transcription"/>
    <property type="evidence" value="ECO:0007669"/>
    <property type="project" value="InterPro"/>
</dbReference>
<dbReference type="GO" id="GO:0046677">
    <property type="term" value="P:response to antibiotic"/>
    <property type="evidence" value="ECO:0007669"/>
    <property type="project" value="UniProtKB-KW"/>
</dbReference>
<dbReference type="CDD" id="cd18159">
    <property type="entry name" value="REC_OmpR_NsrR-like"/>
    <property type="match status" value="1"/>
</dbReference>
<dbReference type="CDD" id="cd00383">
    <property type="entry name" value="trans_reg_C"/>
    <property type="match status" value="1"/>
</dbReference>
<dbReference type="FunFam" id="3.40.50.2300:FF:000232">
    <property type="entry name" value="Response regulator GraR"/>
    <property type="match status" value="1"/>
</dbReference>
<dbReference type="FunFam" id="1.10.10.10:FF:000546">
    <property type="entry name" value="Two-component response regulator GraR"/>
    <property type="match status" value="1"/>
</dbReference>
<dbReference type="Gene3D" id="3.40.50.2300">
    <property type="match status" value="1"/>
</dbReference>
<dbReference type="Gene3D" id="1.10.10.10">
    <property type="entry name" value="Winged helix-like DNA-binding domain superfamily/Winged helix DNA-binding domain"/>
    <property type="match status" value="1"/>
</dbReference>
<dbReference type="InterPro" id="IPR011006">
    <property type="entry name" value="CheY-like_superfamily"/>
</dbReference>
<dbReference type="InterPro" id="IPR001867">
    <property type="entry name" value="OmpR/PhoB-type_DNA-bd"/>
</dbReference>
<dbReference type="InterPro" id="IPR016032">
    <property type="entry name" value="Sig_transdc_resp-reg_C-effctor"/>
</dbReference>
<dbReference type="InterPro" id="IPR001789">
    <property type="entry name" value="Sig_transdc_resp-reg_receiver"/>
</dbReference>
<dbReference type="InterPro" id="IPR039420">
    <property type="entry name" value="WalR-like"/>
</dbReference>
<dbReference type="InterPro" id="IPR036388">
    <property type="entry name" value="WH-like_DNA-bd_sf"/>
</dbReference>
<dbReference type="PANTHER" id="PTHR48111">
    <property type="entry name" value="REGULATOR OF RPOS"/>
    <property type="match status" value="1"/>
</dbReference>
<dbReference type="PANTHER" id="PTHR48111:SF27">
    <property type="entry name" value="SENSORY TRANSDUCTION PROTEIN BCER"/>
    <property type="match status" value="1"/>
</dbReference>
<dbReference type="Pfam" id="PF00072">
    <property type="entry name" value="Response_reg"/>
    <property type="match status" value="1"/>
</dbReference>
<dbReference type="Pfam" id="PF00486">
    <property type="entry name" value="Trans_reg_C"/>
    <property type="match status" value="1"/>
</dbReference>
<dbReference type="SMART" id="SM00448">
    <property type="entry name" value="REC"/>
    <property type="match status" value="1"/>
</dbReference>
<dbReference type="SMART" id="SM00862">
    <property type="entry name" value="Trans_reg_C"/>
    <property type="match status" value="1"/>
</dbReference>
<dbReference type="SUPFAM" id="SSF46894">
    <property type="entry name" value="C-terminal effector domain of the bipartite response regulators"/>
    <property type="match status" value="1"/>
</dbReference>
<dbReference type="SUPFAM" id="SSF52172">
    <property type="entry name" value="CheY-like"/>
    <property type="match status" value="1"/>
</dbReference>
<dbReference type="PROSITE" id="PS51755">
    <property type="entry name" value="OMPR_PHOB"/>
    <property type="match status" value="1"/>
</dbReference>
<dbReference type="PROSITE" id="PS50110">
    <property type="entry name" value="RESPONSE_REGULATORY"/>
    <property type="match status" value="1"/>
</dbReference>
<organism>
    <name type="scientific">Staphylococcus haemolyticus (strain JCSC1435)</name>
    <dbReference type="NCBI Taxonomy" id="279808"/>
    <lineage>
        <taxon>Bacteria</taxon>
        <taxon>Bacillati</taxon>
        <taxon>Bacillota</taxon>
        <taxon>Bacilli</taxon>
        <taxon>Bacillales</taxon>
        <taxon>Staphylococcaceae</taxon>
        <taxon>Staphylococcus</taxon>
    </lineage>
</organism>
<sequence length="224" mass="26149">MQVLLVEDDQTLFQELKKELEHWDFFVTGIDDFSAVMDIYEETNPEIVIMDVQLPKYDGFYWCRKIRQVSNVPILFLSSRDNPMDQVMSMELGADDYMQKPFHTNVLIAKLQAIYRRVYEFGAEEKRTLNWQDALVDLSKDSIQKGDSVIYLSKTEMIILEMLIQKQNQIVTRDTLITALWDDEAFVSDNTLTVNVNRLRKKLSDIGMDTQIETKVGKGYMAHE</sequence>
<evidence type="ECO:0000250" key="1"/>
<evidence type="ECO:0000255" key="2">
    <source>
        <dbReference type="PROSITE-ProRule" id="PRU00169"/>
    </source>
</evidence>
<evidence type="ECO:0000255" key="3">
    <source>
        <dbReference type="PROSITE-ProRule" id="PRU01091"/>
    </source>
</evidence>
<comment type="function">
    <text evidence="1">Member of the two-component regulatory system GraR/GraS involved in resistance against cationic antimicrobial peptides (CAMPs).</text>
</comment>
<comment type="subcellular location">
    <subcellularLocation>
        <location evidence="1">Cytoplasm</location>
    </subcellularLocation>
</comment>
<comment type="PTM">
    <text evidence="1">Phosphorylated by GraS.</text>
</comment>
<keyword id="KW-0010">Activator</keyword>
<keyword id="KW-0046">Antibiotic resistance</keyword>
<keyword id="KW-0963">Cytoplasm</keyword>
<keyword id="KW-0238">DNA-binding</keyword>
<keyword id="KW-0597">Phosphoprotein</keyword>
<keyword id="KW-0678">Repressor</keyword>
<keyword id="KW-0804">Transcription</keyword>
<keyword id="KW-0805">Transcription regulation</keyword>
<keyword id="KW-0902">Two-component regulatory system</keyword>
<keyword id="KW-0843">Virulence</keyword>
<gene>
    <name type="primary">graR</name>
    <name type="ordered locus">SH2235</name>
</gene>